<protein>
    <recommendedName>
        <fullName evidence="6">Probable serine/threonine-protein kinase PBL24</fullName>
        <ecNumber evidence="6">2.7.11.1</ecNumber>
    </recommendedName>
    <alternativeName>
        <fullName evidence="5">PBS1-like protein 24</fullName>
    </alternativeName>
</protein>
<sequence>MSCFLGPSTNNKSRENEGSSMAAPYEQQNLPRNDRRQITTWEAVGTNKESPKNIKAKSFKFRELATATNSFRQEFLIGEGGFGRVYKGKMEKTGQVVAVKQLDRNGLQGNREFLVEIFRLSLLHHPNLANLIGYCLDGDQRLLVHEFMPLGSLEDHLLDVVVGQQPLDWNSRIRIALGAAKGLEYLHEKANPPVIYRDFKSSNILLNVDFDAKLSDFGLAKLGSVGDTQNVSSRVVGTYGYCAPEYHKTGQLTVKSDVYSFGVVLLELITGKRVIDTTRPCHEQNLVTWAQPIFREPNRFPELADPLLQGEFPEKSLNQAVAIAAMCLQEEPIVRPLISDVVTALSFMSTETGSPSGLTGTALNPLSPKTVEDQGWLQCESPRDVYSLL</sequence>
<evidence type="ECO:0000250" key="1">
    <source>
        <dbReference type="UniProtKB" id="O48814"/>
    </source>
</evidence>
<evidence type="ECO:0000250" key="2">
    <source>
        <dbReference type="UniProtKB" id="Q9FE20"/>
    </source>
</evidence>
<evidence type="ECO:0000255" key="3">
    <source>
        <dbReference type="PROSITE-ProRule" id="PRU00159"/>
    </source>
</evidence>
<evidence type="ECO:0000256" key="4">
    <source>
        <dbReference type="SAM" id="MobiDB-lite"/>
    </source>
</evidence>
<evidence type="ECO:0000303" key="5">
    <source>
    </source>
</evidence>
<evidence type="ECO:0000305" key="6"/>
<evidence type="ECO:0000312" key="7">
    <source>
        <dbReference type="Araport" id="AT4G13190"/>
    </source>
</evidence>
<evidence type="ECO:0000312" key="8">
    <source>
        <dbReference type="EMBL" id="CAB41929.1"/>
    </source>
</evidence>
<dbReference type="EC" id="2.7.11.1" evidence="6"/>
<dbReference type="EMBL" id="AL049751">
    <property type="protein sequence ID" value="CAB41929.1"/>
    <property type="status" value="ALT_SEQ"/>
    <property type="molecule type" value="Genomic_DNA"/>
</dbReference>
<dbReference type="EMBL" id="AL161535">
    <property type="protein sequence ID" value="CAB78361.1"/>
    <property type="status" value="ALT_SEQ"/>
    <property type="molecule type" value="Genomic_DNA"/>
</dbReference>
<dbReference type="EMBL" id="CP002687">
    <property type="protein sequence ID" value="AEE83242.1"/>
    <property type="molecule type" value="Genomic_DNA"/>
</dbReference>
<dbReference type="EMBL" id="DQ446829">
    <property type="protein sequence ID" value="ABE66062.1"/>
    <property type="molecule type" value="mRNA"/>
</dbReference>
<dbReference type="EMBL" id="DQ653195">
    <property type="protein sequence ID" value="ABK28629.1"/>
    <property type="status" value="ALT_SEQ"/>
    <property type="molecule type" value="mRNA"/>
</dbReference>
<dbReference type="PIR" id="T07699">
    <property type="entry name" value="T07699"/>
</dbReference>
<dbReference type="RefSeq" id="NP_193055.2">
    <property type="nucleotide sequence ID" value="NM_117388.3"/>
</dbReference>
<dbReference type="SMR" id="Q1PE89"/>
<dbReference type="FunCoup" id="Q1PE89">
    <property type="interactions" value="458"/>
</dbReference>
<dbReference type="STRING" id="3702.Q1PE89"/>
<dbReference type="iPTMnet" id="Q1PE89"/>
<dbReference type="PaxDb" id="3702-AT4G13190.1"/>
<dbReference type="EnsemblPlants" id="AT4G13190.1">
    <property type="protein sequence ID" value="AT4G13190.1"/>
    <property type="gene ID" value="AT4G13190"/>
</dbReference>
<dbReference type="GeneID" id="826933"/>
<dbReference type="Gramene" id="AT4G13190.1">
    <property type="protein sequence ID" value="AT4G13190.1"/>
    <property type="gene ID" value="AT4G13190"/>
</dbReference>
<dbReference type="KEGG" id="ath:AT4G13190"/>
<dbReference type="Araport" id="AT4G13190"/>
<dbReference type="TAIR" id="AT4G13190">
    <property type="gene designation" value="PBL24"/>
</dbReference>
<dbReference type="eggNOG" id="KOG1187">
    <property type="taxonomic scope" value="Eukaryota"/>
</dbReference>
<dbReference type="HOGENOM" id="CLU_000288_21_0_1"/>
<dbReference type="InParanoid" id="Q1PE89"/>
<dbReference type="OMA" id="TENFQTE"/>
<dbReference type="PhylomeDB" id="Q1PE89"/>
<dbReference type="PRO" id="PR:Q1PE89"/>
<dbReference type="Proteomes" id="UP000006548">
    <property type="component" value="Chromosome 4"/>
</dbReference>
<dbReference type="ExpressionAtlas" id="Q1PE89">
    <property type="expression patterns" value="baseline and differential"/>
</dbReference>
<dbReference type="GO" id="GO:0005886">
    <property type="term" value="C:plasma membrane"/>
    <property type="evidence" value="ECO:0007669"/>
    <property type="project" value="UniProtKB-SubCell"/>
</dbReference>
<dbReference type="GO" id="GO:0005524">
    <property type="term" value="F:ATP binding"/>
    <property type="evidence" value="ECO:0007669"/>
    <property type="project" value="UniProtKB-KW"/>
</dbReference>
<dbReference type="GO" id="GO:0106310">
    <property type="term" value="F:protein serine kinase activity"/>
    <property type="evidence" value="ECO:0007669"/>
    <property type="project" value="RHEA"/>
</dbReference>
<dbReference type="GO" id="GO:0004674">
    <property type="term" value="F:protein serine/threonine kinase activity"/>
    <property type="evidence" value="ECO:0007669"/>
    <property type="project" value="UniProtKB-KW"/>
</dbReference>
<dbReference type="GO" id="GO:0006952">
    <property type="term" value="P:defense response"/>
    <property type="evidence" value="ECO:0007669"/>
    <property type="project" value="UniProtKB-KW"/>
</dbReference>
<dbReference type="CDD" id="cd14066">
    <property type="entry name" value="STKc_IRAK"/>
    <property type="match status" value="1"/>
</dbReference>
<dbReference type="FunFam" id="3.30.200.20:FF:000266">
    <property type="entry name" value="probable serine/threonine-protein kinase RLCKVII"/>
    <property type="match status" value="1"/>
</dbReference>
<dbReference type="FunFam" id="1.10.510.10:FF:000032">
    <property type="entry name" value="Serine/threonine-protein kinase PBS1"/>
    <property type="match status" value="1"/>
</dbReference>
<dbReference type="Gene3D" id="3.30.200.20">
    <property type="entry name" value="Phosphorylase Kinase, domain 1"/>
    <property type="match status" value="1"/>
</dbReference>
<dbReference type="Gene3D" id="1.10.510.10">
    <property type="entry name" value="Transferase(Phosphotransferase) domain 1"/>
    <property type="match status" value="1"/>
</dbReference>
<dbReference type="InterPro" id="IPR011009">
    <property type="entry name" value="Kinase-like_dom_sf"/>
</dbReference>
<dbReference type="InterPro" id="IPR000719">
    <property type="entry name" value="Prot_kinase_dom"/>
</dbReference>
<dbReference type="InterPro" id="IPR017441">
    <property type="entry name" value="Protein_kinase_ATP_BS"/>
</dbReference>
<dbReference type="InterPro" id="IPR008271">
    <property type="entry name" value="Ser/Thr_kinase_AS"/>
</dbReference>
<dbReference type="PANTHER" id="PTHR47985">
    <property type="entry name" value="OS07G0668900 PROTEIN"/>
    <property type="match status" value="1"/>
</dbReference>
<dbReference type="PANTHER" id="PTHR47985:SF34">
    <property type="entry name" value="SERINE_THREONINE-PROTEIN KINASE PBL24-RELATED"/>
    <property type="match status" value="1"/>
</dbReference>
<dbReference type="Pfam" id="PF00069">
    <property type="entry name" value="Pkinase"/>
    <property type="match status" value="1"/>
</dbReference>
<dbReference type="SUPFAM" id="SSF56112">
    <property type="entry name" value="Protein kinase-like (PK-like)"/>
    <property type="match status" value="1"/>
</dbReference>
<dbReference type="PROSITE" id="PS00107">
    <property type="entry name" value="PROTEIN_KINASE_ATP"/>
    <property type="match status" value="1"/>
</dbReference>
<dbReference type="PROSITE" id="PS50011">
    <property type="entry name" value="PROTEIN_KINASE_DOM"/>
    <property type="match status" value="1"/>
</dbReference>
<dbReference type="PROSITE" id="PS00108">
    <property type="entry name" value="PROTEIN_KINASE_ST"/>
    <property type="match status" value="1"/>
</dbReference>
<feature type="chain" id="PRO_0000438616" description="Probable serine/threonine-protein kinase PBL24">
    <location>
        <begin position="1"/>
        <end position="389"/>
    </location>
</feature>
<feature type="domain" description="Protein kinase" evidence="3">
    <location>
        <begin position="71"/>
        <end position="348"/>
    </location>
</feature>
<feature type="region of interest" description="Disordered" evidence="4">
    <location>
        <begin position="1"/>
        <end position="36"/>
    </location>
</feature>
<feature type="active site" description="Proton acceptor" evidence="3">
    <location>
        <position position="198"/>
    </location>
</feature>
<feature type="binding site" evidence="3">
    <location>
        <begin position="77"/>
        <end position="85"/>
    </location>
    <ligand>
        <name>ATP</name>
        <dbReference type="ChEBI" id="CHEBI:30616"/>
    </ligand>
</feature>
<feature type="binding site" evidence="3">
    <location>
        <position position="100"/>
    </location>
    <ligand>
        <name>ATP</name>
        <dbReference type="ChEBI" id="CHEBI:30616"/>
    </ligand>
</feature>
<feature type="modified residue" description="Phosphoserine" evidence="1">
    <location>
        <position position="202"/>
    </location>
</feature>
<feature type="modified residue" description="Phosphoserine" evidence="1">
    <location>
        <position position="232"/>
    </location>
</feature>
<feature type="modified residue" description="Phosphothreonine" evidence="1">
    <location>
        <position position="238"/>
    </location>
</feature>
<feature type="modified residue" description="Phosphotyrosine" evidence="1">
    <location>
        <position position="246"/>
    </location>
</feature>
<feature type="lipid moiety-binding region" description="S-palmitoyl cysteine" evidence="2">
    <location>
        <position position="3"/>
    </location>
</feature>
<name>PBL24_ARATH</name>
<accession>Q1PE89</accession>
<accession>A0MF69</accession>
<accession>Q9SVQ8</accession>
<gene>
    <name evidence="5" type="primary">PBL24</name>
    <name evidence="7" type="ordered locus">At4g13190</name>
    <name evidence="8" type="ORF">F17N18.80</name>
</gene>
<keyword id="KW-0067">ATP-binding</keyword>
<keyword id="KW-1003">Cell membrane</keyword>
<keyword id="KW-0418">Kinase</keyword>
<keyword id="KW-0449">Lipoprotein</keyword>
<keyword id="KW-0472">Membrane</keyword>
<keyword id="KW-0547">Nucleotide-binding</keyword>
<keyword id="KW-0564">Palmitate</keyword>
<keyword id="KW-0597">Phosphoprotein</keyword>
<keyword id="KW-0611">Plant defense</keyword>
<keyword id="KW-1185">Reference proteome</keyword>
<keyword id="KW-0723">Serine/threonine-protein kinase</keyword>
<keyword id="KW-0808">Transferase</keyword>
<reference key="1">
    <citation type="journal article" date="1999" name="Nature">
        <title>Sequence and analysis of chromosome 4 of the plant Arabidopsis thaliana.</title>
        <authorList>
            <person name="Mayer K.F.X."/>
            <person name="Schueller C."/>
            <person name="Wambutt R."/>
            <person name="Murphy G."/>
            <person name="Volckaert G."/>
            <person name="Pohl T."/>
            <person name="Duesterhoeft A."/>
            <person name="Stiekema W."/>
            <person name="Entian K.-D."/>
            <person name="Terryn N."/>
            <person name="Harris B."/>
            <person name="Ansorge W."/>
            <person name="Brandt P."/>
            <person name="Grivell L.A."/>
            <person name="Rieger M."/>
            <person name="Weichselgartner M."/>
            <person name="de Simone V."/>
            <person name="Obermaier B."/>
            <person name="Mache R."/>
            <person name="Mueller M."/>
            <person name="Kreis M."/>
            <person name="Delseny M."/>
            <person name="Puigdomenech P."/>
            <person name="Watson M."/>
            <person name="Schmidtheini T."/>
            <person name="Reichert B."/>
            <person name="Portetelle D."/>
            <person name="Perez-Alonso M."/>
            <person name="Boutry M."/>
            <person name="Bancroft I."/>
            <person name="Vos P."/>
            <person name="Hoheisel J."/>
            <person name="Zimmermann W."/>
            <person name="Wedler H."/>
            <person name="Ridley P."/>
            <person name="Langham S.-A."/>
            <person name="McCullagh B."/>
            <person name="Bilham L."/>
            <person name="Robben J."/>
            <person name="van der Schueren J."/>
            <person name="Grymonprez B."/>
            <person name="Chuang Y.-J."/>
            <person name="Vandenbussche F."/>
            <person name="Braeken M."/>
            <person name="Weltjens I."/>
            <person name="Voet M."/>
            <person name="Bastiaens I."/>
            <person name="Aert R."/>
            <person name="Defoor E."/>
            <person name="Weitzenegger T."/>
            <person name="Bothe G."/>
            <person name="Ramsperger U."/>
            <person name="Hilbert H."/>
            <person name="Braun M."/>
            <person name="Holzer E."/>
            <person name="Brandt A."/>
            <person name="Peters S."/>
            <person name="van Staveren M."/>
            <person name="Dirkse W."/>
            <person name="Mooijman P."/>
            <person name="Klein Lankhorst R."/>
            <person name="Rose M."/>
            <person name="Hauf J."/>
            <person name="Koetter P."/>
            <person name="Berneiser S."/>
            <person name="Hempel S."/>
            <person name="Feldpausch M."/>
            <person name="Lamberth S."/>
            <person name="Van den Daele H."/>
            <person name="De Keyser A."/>
            <person name="Buysshaert C."/>
            <person name="Gielen J."/>
            <person name="Villarroel R."/>
            <person name="De Clercq R."/>
            <person name="van Montagu M."/>
            <person name="Rogers J."/>
            <person name="Cronin A."/>
            <person name="Quail M.A."/>
            <person name="Bray-Allen S."/>
            <person name="Clark L."/>
            <person name="Doggett J."/>
            <person name="Hall S."/>
            <person name="Kay M."/>
            <person name="Lennard N."/>
            <person name="McLay K."/>
            <person name="Mayes R."/>
            <person name="Pettett A."/>
            <person name="Rajandream M.A."/>
            <person name="Lyne M."/>
            <person name="Benes V."/>
            <person name="Rechmann S."/>
            <person name="Borkova D."/>
            <person name="Bloecker H."/>
            <person name="Scharfe M."/>
            <person name="Grimm M."/>
            <person name="Loehnert T.-H."/>
            <person name="Dose S."/>
            <person name="de Haan M."/>
            <person name="Maarse A.C."/>
            <person name="Schaefer M."/>
            <person name="Mueller-Auer S."/>
            <person name="Gabel C."/>
            <person name="Fuchs M."/>
            <person name="Fartmann B."/>
            <person name="Granderath K."/>
            <person name="Dauner D."/>
            <person name="Herzl A."/>
            <person name="Neumann S."/>
            <person name="Argiriou A."/>
            <person name="Vitale D."/>
            <person name="Liguori R."/>
            <person name="Piravandi E."/>
            <person name="Massenet O."/>
            <person name="Quigley F."/>
            <person name="Clabauld G."/>
            <person name="Muendlein A."/>
            <person name="Felber R."/>
            <person name="Schnabl S."/>
            <person name="Hiller R."/>
            <person name="Schmidt W."/>
            <person name="Lecharny A."/>
            <person name="Aubourg S."/>
            <person name="Chefdor F."/>
            <person name="Cooke R."/>
            <person name="Berger C."/>
            <person name="Monfort A."/>
            <person name="Casacuberta E."/>
            <person name="Gibbons T."/>
            <person name="Weber N."/>
            <person name="Vandenbol M."/>
            <person name="Bargues M."/>
            <person name="Terol J."/>
            <person name="Torres A."/>
            <person name="Perez-Perez A."/>
            <person name="Purnelle B."/>
            <person name="Bent E."/>
            <person name="Johnson S."/>
            <person name="Tacon D."/>
            <person name="Jesse T."/>
            <person name="Heijnen L."/>
            <person name="Schwarz S."/>
            <person name="Scholler P."/>
            <person name="Heber S."/>
            <person name="Francs P."/>
            <person name="Bielke C."/>
            <person name="Frishman D."/>
            <person name="Haase D."/>
            <person name="Lemcke K."/>
            <person name="Mewes H.-W."/>
            <person name="Stocker S."/>
            <person name="Zaccaria P."/>
            <person name="Bevan M."/>
            <person name="Wilson R.K."/>
            <person name="de la Bastide M."/>
            <person name="Habermann K."/>
            <person name="Parnell L."/>
            <person name="Dedhia N."/>
            <person name="Gnoj L."/>
            <person name="Schutz K."/>
            <person name="Huang E."/>
            <person name="Spiegel L."/>
            <person name="Sekhon M."/>
            <person name="Murray J."/>
            <person name="Sheet P."/>
            <person name="Cordes M."/>
            <person name="Abu-Threideh J."/>
            <person name="Stoneking T."/>
            <person name="Kalicki J."/>
            <person name="Graves T."/>
            <person name="Harmon G."/>
            <person name="Edwards J."/>
            <person name="Latreille P."/>
            <person name="Courtney L."/>
            <person name="Cloud J."/>
            <person name="Abbott A."/>
            <person name="Scott K."/>
            <person name="Johnson D."/>
            <person name="Minx P."/>
            <person name="Bentley D."/>
            <person name="Fulton B."/>
            <person name="Miller N."/>
            <person name="Greco T."/>
            <person name="Kemp K."/>
            <person name="Kramer J."/>
            <person name="Fulton L."/>
            <person name="Mardis E."/>
            <person name="Dante M."/>
            <person name="Pepin K."/>
            <person name="Hillier L.W."/>
            <person name="Nelson J."/>
            <person name="Spieth J."/>
            <person name="Ryan E."/>
            <person name="Andrews S."/>
            <person name="Geisel C."/>
            <person name="Layman D."/>
            <person name="Du H."/>
            <person name="Ali J."/>
            <person name="Berghoff A."/>
            <person name="Jones K."/>
            <person name="Drone K."/>
            <person name="Cotton M."/>
            <person name="Joshu C."/>
            <person name="Antonoiu B."/>
            <person name="Zidanic M."/>
            <person name="Strong C."/>
            <person name="Sun H."/>
            <person name="Lamar B."/>
            <person name="Yordan C."/>
            <person name="Ma P."/>
            <person name="Zhong J."/>
            <person name="Preston R."/>
            <person name="Vil D."/>
            <person name="Shekher M."/>
            <person name="Matero A."/>
            <person name="Shah R."/>
            <person name="Swaby I.K."/>
            <person name="O'Shaughnessy A."/>
            <person name="Rodriguez M."/>
            <person name="Hoffman J."/>
            <person name="Till S."/>
            <person name="Granat S."/>
            <person name="Shohdy N."/>
            <person name="Hasegawa A."/>
            <person name="Hameed A."/>
            <person name="Lodhi M."/>
            <person name="Johnson A."/>
            <person name="Chen E."/>
            <person name="Marra M.A."/>
            <person name="Martienssen R."/>
            <person name="McCombie W.R."/>
        </authorList>
    </citation>
    <scope>NUCLEOTIDE SEQUENCE [LARGE SCALE GENOMIC DNA]</scope>
    <source>
        <strain>cv. Columbia</strain>
    </source>
</reference>
<reference key="2">
    <citation type="journal article" date="2017" name="Plant J.">
        <title>Araport11: a complete reannotation of the Arabidopsis thaliana reference genome.</title>
        <authorList>
            <person name="Cheng C.Y."/>
            <person name="Krishnakumar V."/>
            <person name="Chan A.P."/>
            <person name="Thibaud-Nissen F."/>
            <person name="Schobel S."/>
            <person name="Town C.D."/>
        </authorList>
    </citation>
    <scope>GENOME REANNOTATION</scope>
    <source>
        <strain>cv. Columbia</strain>
    </source>
</reference>
<reference key="3">
    <citation type="journal article" date="2006" name="Plant Biotechnol. J.">
        <title>Simultaneous high-throughput recombinational cloning of open reading frames in closed and open configurations.</title>
        <authorList>
            <person name="Underwood B.A."/>
            <person name="Vanderhaeghen R."/>
            <person name="Whitford R."/>
            <person name="Town C.D."/>
            <person name="Hilson P."/>
        </authorList>
    </citation>
    <scope>NUCLEOTIDE SEQUENCE [LARGE SCALE MRNA]</scope>
    <source>
        <strain>cv. Columbia</strain>
    </source>
</reference>
<reference key="4">
    <citation type="journal article" date="2010" name="Cell Host Microbe">
        <title>Receptor-like cytoplasmic kinases integrate signaling from multiple plant immune receptors and are targeted by a Pseudomonas syringae effector.</title>
        <authorList>
            <person name="Zhang J."/>
            <person name="Li W."/>
            <person name="Xiang T."/>
            <person name="Liu Z."/>
            <person name="Laluk K."/>
            <person name="Ding X."/>
            <person name="Zou Y."/>
            <person name="Gao M."/>
            <person name="Zhang X."/>
            <person name="Chen S."/>
            <person name="Mengiste T."/>
            <person name="Zhang Y."/>
            <person name="Zhou J.M."/>
        </authorList>
    </citation>
    <scope>GENE FAMILY</scope>
    <scope>NOMENCLATURE</scope>
</reference>
<comment type="function">
    <text evidence="1">May be involved in plant defense signaling.</text>
</comment>
<comment type="catalytic activity">
    <reaction evidence="6">
        <text>L-seryl-[protein] + ATP = O-phospho-L-seryl-[protein] + ADP + H(+)</text>
        <dbReference type="Rhea" id="RHEA:17989"/>
        <dbReference type="Rhea" id="RHEA-COMP:9863"/>
        <dbReference type="Rhea" id="RHEA-COMP:11604"/>
        <dbReference type="ChEBI" id="CHEBI:15378"/>
        <dbReference type="ChEBI" id="CHEBI:29999"/>
        <dbReference type="ChEBI" id="CHEBI:30616"/>
        <dbReference type="ChEBI" id="CHEBI:83421"/>
        <dbReference type="ChEBI" id="CHEBI:456216"/>
        <dbReference type="EC" id="2.7.11.1"/>
    </reaction>
</comment>
<comment type="catalytic activity">
    <reaction evidence="6">
        <text>L-threonyl-[protein] + ATP = O-phospho-L-threonyl-[protein] + ADP + H(+)</text>
        <dbReference type="Rhea" id="RHEA:46608"/>
        <dbReference type="Rhea" id="RHEA-COMP:11060"/>
        <dbReference type="Rhea" id="RHEA-COMP:11605"/>
        <dbReference type="ChEBI" id="CHEBI:15378"/>
        <dbReference type="ChEBI" id="CHEBI:30013"/>
        <dbReference type="ChEBI" id="CHEBI:30616"/>
        <dbReference type="ChEBI" id="CHEBI:61977"/>
        <dbReference type="ChEBI" id="CHEBI:456216"/>
        <dbReference type="EC" id="2.7.11.1"/>
    </reaction>
</comment>
<comment type="subcellular location">
    <subcellularLocation>
        <location evidence="1">Cell membrane</location>
        <topology evidence="1">Lipid-anchor</topology>
    </subcellularLocation>
</comment>
<comment type="similarity">
    <text evidence="3">Belongs to the protein kinase superfamily. Ser/Thr protein kinase family.</text>
</comment>
<comment type="sequence caution" evidence="6">
    <conflict type="erroneous termination">
        <sequence resource="EMBL-CDS" id="ABK28629"/>
    </conflict>
    <text>Extended C-terminus.</text>
</comment>
<comment type="sequence caution" evidence="6">
    <conflict type="erroneous gene model prediction">
        <sequence resource="EMBL-CDS" id="CAB41929"/>
    </conflict>
</comment>
<comment type="sequence caution" evidence="6">
    <conflict type="erroneous gene model prediction">
        <sequence resource="EMBL-CDS" id="CAB78361"/>
    </conflict>
</comment>
<proteinExistence type="evidence at transcript level"/>
<organism>
    <name type="scientific">Arabidopsis thaliana</name>
    <name type="common">Mouse-ear cress</name>
    <dbReference type="NCBI Taxonomy" id="3702"/>
    <lineage>
        <taxon>Eukaryota</taxon>
        <taxon>Viridiplantae</taxon>
        <taxon>Streptophyta</taxon>
        <taxon>Embryophyta</taxon>
        <taxon>Tracheophyta</taxon>
        <taxon>Spermatophyta</taxon>
        <taxon>Magnoliopsida</taxon>
        <taxon>eudicotyledons</taxon>
        <taxon>Gunneridae</taxon>
        <taxon>Pentapetalae</taxon>
        <taxon>rosids</taxon>
        <taxon>malvids</taxon>
        <taxon>Brassicales</taxon>
        <taxon>Brassicaceae</taxon>
        <taxon>Camelineae</taxon>
        <taxon>Arabidopsis</taxon>
    </lineage>
</organism>